<gene>
    <name type="primary">Dipk1a</name>
    <name evidence="4" type="synonym">Fam69a</name>
</gene>
<dbReference type="EMBL" id="AK013580">
    <property type="protein sequence ID" value="BAB28914.1"/>
    <property type="molecule type" value="mRNA"/>
</dbReference>
<dbReference type="EMBL" id="AK048979">
    <property type="protein sequence ID" value="BAC33502.1"/>
    <property type="molecule type" value="mRNA"/>
</dbReference>
<dbReference type="EMBL" id="AK050305">
    <property type="protein sequence ID" value="BAC34177.1"/>
    <property type="molecule type" value="mRNA"/>
</dbReference>
<dbReference type="EMBL" id="AK053273">
    <property type="protein sequence ID" value="BAE43353.1"/>
    <property type="molecule type" value="mRNA"/>
</dbReference>
<dbReference type="EMBL" id="AK153488">
    <property type="protein sequence ID" value="BAE32036.1"/>
    <property type="molecule type" value="mRNA"/>
</dbReference>
<dbReference type="EMBL" id="BC116683">
    <property type="protein sequence ID" value="AAI16684.1"/>
    <property type="molecule type" value="mRNA"/>
</dbReference>
<dbReference type="CCDS" id="CCDS39200.1"/>
<dbReference type="RefSeq" id="NP_080338.1">
    <property type="nucleotide sequence ID" value="NM_026062.4"/>
</dbReference>
<dbReference type="SMR" id="Q9D6I7"/>
<dbReference type="BioGRID" id="212058">
    <property type="interactions" value="1"/>
</dbReference>
<dbReference type="FunCoup" id="Q9D6I7">
    <property type="interactions" value="28"/>
</dbReference>
<dbReference type="IntAct" id="Q9D6I7">
    <property type="interactions" value="1"/>
</dbReference>
<dbReference type="MINT" id="Q9D6I7"/>
<dbReference type="STRING" id="10090.ENSMUSP00000031198"/>
<dbReference type="iPTMnet" id="Q9D6I7"/>
<dbReference type="PhosphoSitePlus" id="Q9D6I7"/>
<dbReference type="SwissPalm" id="Q9D6I7"/>
<dbReference type="PaxDb" id="10090-ENSMUSP00000031198"/>
<dbReference type="ProteomicsDB" id="275580"/>
<dbReference type="Pumba" id="Q9D6I7"/>
<dbReference type="Antibodypedia" id="2517">
    <property type="antibodies" value="43 antibodies from 10 providers"/>
</dbReference>
<dbReference type="Ensembl" id="ENSMUST00000031198.11">
    <property type="protein sequence ID" value="ENSMUSP00000031198.5"/>
    <property type="gene ID" value="ENSMUSG00000029270.11"/>
</dbReference>
<dbReference type="GeneID" id="67266"/>
<dbReference type="KEGG" id="mmu:67266"/>
<dbReference type="UCSC" id="uc008yni.2">
    <property type="organism name" value="mouse"/>
</dbReference>
<dbReference type="AGR" id="MGI:1914516"/>
<dbReference type="CTD" id="388650"/>
<dbReference type="MGI" id="MGI:1914516">
    <property type="gene designation" value="Dipk1a"/>
</dbReference>
<dbReference type="VEuPathDB" id="HostDB:ENSMUSG00000029270"/>
<dbReference type="eggNOG" id="ENOG502QU5P">
    <property type="taxonomic scope" value="Eukaryota"/>
</dbReference>
<dbReference type="GeneTree" id="ENSGT00390000006452"/>
<dbReference type="HOGENOM" id="CLU_039177_0_0_1"/>
<dbReference type="InParanoid" id="Q9D6I7"/>
<dbReference type="OMA" id="YMRIKYL"/>
<dbReference type="OrthoDB" id="8860232at2759"/>
<dbReference type="PhylomeDB" id="Q9D6I7"/>
<dbReference type="TreeFam" id="TF313319"/>
<dbReference type="BioGRID-ORCS" id="67266">
    <property type="hits" value="0 hits in 77 CRISPR screens"/>
</dbReference>
<dbReference type="ChiTaRS" id="Dipk1a">
    <property type="organism name" value="mouse"/>
</dbReference>
<dbReference type="PRO" id="PR:Q9D6I7"/>
<dbReference type="Proteomes" id="UP000000589">
    <property type="component" value="Chromosome 5"/>
</dbReference>
<dbReference type="RNAct" id="Q9D6I7">
    <property type="molecule type" value="protein"/>
</dbReference>
<dbReference type="Bgee" id="ENSMUSG00000029270">
    <property type="expression patterns" value="Expressed in placenta labyrinth and 229 other cell types or tissues"/>
</dbReference>
<dbReference type="ExpressionAtlas" id="Q9D6I7">
    <property type="expression patterns" value="baseline and differential"/>
</dbReference>
<dbReference type="GO" id="GO:0005789">
    <property type="term" value="C:endoplasmic reticulum membrane"/>
    <property type="evidence" value="ECO:0007669"/>
    <property type="project" value="UniProtKB-SubCell"/>
</dbReference>
<dbReference type="InterPro" id="IPR022049">
    <property type="entry name" value="FAM69_kinase_dom"/>
</dbReference>
<dbReference type="InterPro" id="IPR029244">
    <property type="entry name" value="FAM69_N"/>
</dbReference>
<dbReference type="PANTHER" id="PTHR21093:SF4">
    <property type="entry name" value="DIVERGENT PROTEIN KINASE DOMAIN 1A"/>
    <property type="match status" value="1"/>
</dbReference>
<dbReference type="PANTHER" id="PTHR21093">
    <property type="entry name" value="DIVERGENT PROTEIN KINASE DOMAIN 1C-RELATED"/>
    <property type="match status" value="1"/>
</dbReference>
<dbReference type="Pfam" id="PF12260">
    <property type="entry name" value="PIP49_C"/>
    <property type="match status" value="1"/>
</dbReference>
<dbReference type="Pfam" id="PF14875">
    <property type="entry name" value="PIP49_N"/>
    <property type="match status" value="1"/>
</dbReference>
<dbReference type="SMART" id="SM01299">
    <property type="entry name" value="PIP49_N"/>
    <property type="match status" value="1"/>
</dbReference>
<comment type="subcellular location">
    <subcellularLocation>
        <location evidence="2">Endoplasmic reticulum membrane</location>
        <topology evidence="2">Single-pass type II membrane protein</topology>
    </subcellularLocation>
</comment>
<comment type="tissue specificity">
    <text evidence="2">Ubiquitous.</text>
</comment>
<comment type="PTM">
    <text>Among the many cysteines in the lumenal domain, most are probably involved in disulfide bonds.</text>
</comment>
<comment type="similarity">
    <text evidence="3">Belongs to the DIPK family.</text>
</comment>
<accession>Q9D6I7</accession>
<accession>Q3U5P1</accession>
<accession>Q3V308</accession>
<evidence type="ECO:0000255" key="1"/>
<evidence type="ECO:0000269" key="2">
    <source>
    </source>
</evidence>
<evidence type="ECO:0000305" key="3"/>
<evidence type="ECO:0000312" key="4">
    <source>
        <dbReference type="MGI" id="MGI:1914516"/>
    </source>
</evidence>
<protein>
    <recommendedName>
        <fullName evidence="3">Divergent protein kinase domain 1A</fullName>
    </recommendedName>
    <alternativeName>
        <fullName>Protein FAM69A</fullName>
    </alternativeName>
</protein>
<sequence>MARSLCAGAWLRKPHYLQARLSYMRVKYLFFSWLVVFVGSWIIYVQYSTYTELCRGKDCKKIICDKYKTGVIDGPACNSLCVTETLYFGKCLSNKPSNQMYLGVWDNLPGVVKCQMEQALHLDFGTELEPRKEIVLFDKPTRGTTVQKFKEMVYSLFKAKLGDQGNLSELVNLILTVADGDRDGQVSLGEAKSAWALLQLNEFLLMVILQDKEHTPKLMGFCGDLYVMESVEYTSLYGISLPWVMELFIPSGFRRSMDQLFTPSWPRKAKIAIGLLEFVEDVFHGPYGNFLMCDTSAKNLGYNEKYDLKMVDMRKIVPETNLKELIKDRHCESDLDCVYGTDCRTSCDLSTMKCTSEVIQPNLAKACQLLKDYLLHGAPSEIREELEKQLYSCIALKVTANQMEMEHSLILNNLKTLLWKKISYTNDS</sequence>
<name>DIK1A_MOUSE</name>
<feature type="chain" id="PRO_0000282424" description="Divergent protein kinase domain 1A">
    <location>
        <begin position="1"/>
        <end position="428"/>
    </location>
</feature>
<feature type="topological domain" description="Cytoplasmic" evidence="1">
    <location>
        <begin position="1"/>
        <end position="27"/>
    </location>
</feature>
<feature type="transmembrane region" description="Helical" evidence="1">
    <location>
        <begin position="28"/>
        <end position="48"/>
    </location>
</feature>
<feature type="topological domain" description="Lumenal" evidence="1">
    <location>
        <begin position="49"/>
        <end position="428"/>
    </location>
</feature>
<feature type="sequence conflict" description="In Ref. 1; BAE43353." evidence="3" ref="1">
    <original>W</original>
    <variation>G</variation>
    <location>
        <position position="41"/>
    </location>
</feature>
<feature type="sequence conflict" description="In Ref. 1; BAE32036." evidence="3" ref="1">
    <original>I</original>
    <variation>V</variation>
    <location>
        <position position="134"/>
    </location>
</feature>
<feature type="sequence conflict" description="In Ref. 1; BAE32036." evidence="3" ref="1">
    <original>K</original>
    <variation>I</variation>
    <location>
        <position position="160"/>
    </location>
</feature>
<organism>
    <name type="scientific">Mus musculus</name>
    <name type="common">Mouse</name>
    <dbReference type="NCBI Taxonomy" id="10090"/>
    <lineage>
        <taxon>Eukaryota</taxon>
        <taxon>Metazoa</taxon>
        <taxon>Chordata</taxon>
        <taxon>Craniata</taxon>
        <taxon>Vertebrata</taxon>
        <taxon>Euteleostomi</taxon>
        <taxon>Mammalia</taxon>
        <taxon>Eutheria</taxon>
        <taxon>Euarchontoglires</taxon>
        <taxon>Glires</taxon>
        <taxon>Rodentia</taxon>
        <taxon>Myomorpha</taxon>
        <taxon>Muroidea</taxon>
        <taxon>Muridae</taxon>
        <taxon>Murinae</taxon>
        <taxon>Mus</taxon>
        <taxon>Mus</taxon>
    </lineage>
</organism>
<reference key="1">
    <citation type="journal article" date="2005" name="Science">
        <title>The transcriptional landscape of the mammalian genome.</title>
        <authorList>
            <person name="Carninci P."/>
            <person name="Kasukawa T."/>
            <person name="Katayama S."/>
            <person name="Gough J."/>
            <person name="Frith M.C."/>
            <person name="Maeda N."/>
            <person name="Oyama R."/>
            <person name="Ravasi T."/>
            <person name="Lenhard B."/>
            <person name="Wells C."/>
            <person name="Kodzius R."/>
            <person name="Shimokawa K."/>
            <person name="Bajic V.B."/>
            <person name="Brenner S.E."/>
            <person name="Batalov S."/>
            <person name="Forrest A.R."/>
            <person name="Zavolan M."/>
            <person name="Davis M.J."/>
            <person name="Wilming L.G."/>
            <person name="Aidinis V."/>
            <person name="Allen J.E."/>
            <person name="Ambesi-Impiombato A."/>
            <person name="Apweiler R."/>
            <person name="Aturaliya R.N."/>
            <person name="Bailey T.L."/>
            <person name="Bansal M."/>
            <person name="Baxter L."/>
            <person name="Beisel K.W."/>
            <person name="Bersano T."/>
            <person name="Bono H."/>
            <person name="Chalk A.M."/>
            <person name="Chiu K.P."/>
            <person name="Choudhary V."/>
            <person name="Christoffels A."/>
            <person name="Clutterbuck D.R."/>
            <person name="Crowe M.L."/>
            <person name="Dalla E."/>
            <person name="Dalrymple B.P."/>
            <person name="de Bono B."/>
            <person name="Della Gatta G."/>
            <person name="di Bernardo D."/>
            <person name="Down T."/>
            <person name="Engstrom P."/>
            <person name="Fagiolini M."/>
            <person name="Faulkner G."/>
            <person name="Fletcher C.F."/>
            <person name="Fukushima T."/>
            <person name="Furuno M."/>
            <person name="Futaki S."/>
            <person name="Gariboldi M."/>
            <person name="Georgii-Hemming P."/>
            <person name="Gingeras T.R."/>
            <person name="Gojobori T."/>
            <person name="Green R.E."/>
            <person name="Gustincich S."/>
            <person name="Harbers M."/>
            <person name="Hayashi Y."/>
            <person name="Hensch T.K."/>
            <person name="Hirokawa N."/>
            <person name="Hill D."/>
            <person name="Huminiecki L."/>
            <person name="Iacono M."/>
            <person name="Ikeo K."/>
            <person name="Iwama A."/>
            <person name="Ishikawa T."/>
            <person name="Jakt M."/>
            <person name="Kanapin A."/>
            <person name="Katoh M."/>
            <person name="Kawasawa Y."/>
            <person name="Kelso J."/>
            <person name="Kitamura H."/>
            <person name="Kitano H."/>
            <person name="Kollias G."/>
            <person name="Krishnan S.P."/>
            <person name="Kruger A."/>
            <person name="Kummerfeld S.K."/>
            <person name="Kurochkin I.V."/>
            <person name="Lareau L.F."/>
            <person name="Lazarevic D."/>
            <person name="Lipovich L."/>
            <person name="Liu J."/>
            <person name="Liuni S."/>
            <person name="McWilliam S."/>
            <person name="Madan Babu M."/>
            <person name="Madera M."/>
            <person name="Marchionni L."/>
            <person name="Matsuda H."/>
            <person name="Matsuzawa S."/>
            <person name="Miki H."/>
            <person name="Mignone F."/>
            <person name="Miyake S."/>
            <person name="Morris K."/>
            <person name="Mottagui-Tabar S."/>
            <person name="Mulder N."/>
            <person name="Nakano N."/>
            <person name="Nakauchi H."/>
            <person name="Ng P."/>
            <person name="Nilsson R."/>
            <person name="Nishiguchi S."/>
            <person name="Nishikawa S."/>
            <person name="Nori F."/>
            <person name="Ohara O."/>
            <person name="Okazaki Y."/>
            <person name="Orlando V."/>
            <person name="Pang K.C."/>
            <person name="Pavan W.J."/>
            <person name="Pavesi G."/>
            <person name="Pesole G."/>
            <person name="Petrovsky N."/>
            <person name="Piazza S."/>
            <person name="Reed J."/>
            <person name="Reid J.F."/>
            <person name="Ring B.Z."/>
            <person name="Ringwald M."/>
            <person name="Rost B."/>
            <person name="Ruan Y."/>
            <person name="Salzberg S.L."/>
            <person name="Sandelin A."/>
            <person name="Schneider C."/>
            <person name="Schoenbach C."/>
            <person name="Sekiguchi K."/>
            <person name="Semple C.A."/>
            <person name="Seno S."/>
            <person name="Sessa L."/>
            <person name="Sheng Y."/>
            <person name="Shibata Y."/>
            <person name="Shimada H."/>
            <person name="Shimada K."/>
            <person name="Silva D."/>
            <person name="Sinclair B."/>
            <person name="Sperling S."/>
            <person name="Stupka E."/>
            <person name="Sugiura K."/>
            <person name="Sultana R."/>
            <person name="Takenaka Y."/>
            <person name="Taki K."/>
            <person name="Tammoja K."/>
            <person name="Tan S.L."/>
            <person name="Tang S."/>
            <person name="Taylor M.S."/>
            <person name="Tegner J."/>
            <person name="Teichmann S.A."/>
            <person name="Ueda H.R."/>
            <person name="van Nimwegen E."/>
            <person name="Verardo R."/>
            <person name="Wei C.L."/>
            <person name="Yagi K."/>
            <person name="Yamanishi H."/>
            <person name="Zabarovsky E."/>
            <person name="Zhu S."/>
            <person name="Zimmer A."/>
            <person name="Hide W."/>
            <person name="Bult C."/>
            <person name="Grimmond S.M."/>
            <person name="Teasdale R.D."/>
            <person name="Liu E.T."/>
            <person name="Brusic V."/>
            <person name="Quackenbush J."/>
            <person name="Wahlestedt C."/>
            <person name="Mattick J.S."/>
            <person name="Hume D.A."/>
            <person name="Kai C."/>
            <person name="Sasaki D."/>
            <person name="Tomaru Y."/>
            <person name="Fukuda S."/>
            <person name="Kanamori-Katayama M."/>
            <person name="Suzuki M."/>
            <person name="Aoki J."/>
            <person name="Arakawa T."/>
            <person name="Iida J."/>
            <person name="Imamura K."/>
            <person name="Itoh M."/>
            <person name="Kato T."/>
            <person name="Kawaji H."/>
            <person name="Kawagashira N."/>
            <person name="Kawashima T."/>
            <person name="Kojima M."/>
            <person name="Kondo S."/>
            <person name="Konno H."/>
            <person name="Nakano K."/>
            <person name="Ninomiya N."/>
            <person name="Nishio T."/>
            <person name="Okada M."/>
            <person name="Plessy C."/>
            <person name="Shibata K."/>
            <person name="Shiraki T."/>
            <person name="Suzuki S."/>
            <person name="Tagami M."/>
            <person name="Waki K."/>
            <person name="Watahiki A."/>
            <person name="Okamura-Oho Y."/>
            <person name="Suzuki H."/>
            <person name="Kawai J."/>
            <person name="Hayashizaki Y."/>
        </authorList>
    </citation>
    <scope>NUCLEOTIDE SEQUENCE [LARGE SCALE MRNA]</scope>
    <source>
        <strain>C57BL/6J</strain>
        <tissue>Bone marrow</tissue>
        <tissue>Cerebellum</tissue>
        <tissue>Eye</tissue>
        <tissue>Hippocampus</tissue>
        <tissue>Liver</tissue>
    </source>
</reference>
<reference key="2">
    <citation type="journal article" date="2004" name="Genome Res.">
        <title>The status, quality, and expansion of the NIH full-length cDNA project: the Mammalian Gene Collection (MGC).</title>
        <authorList>
            <consortium name="The MGC Project Team"/>
        </authorList>
    </citation>
    <scope>NUCLEOTIDE SEQUENCE [LARGE SCALE MRNA]</scope>
</reference>
<reference key="3">
    <citation type="journal article" date="2011" name="Biochem. Biophys. Res. Commun.">
        <title>Characterisation of the FAM69 family of cysteine-rich endoplasmic reticulum proteins.</title>
        <authorList>
            <person name="Tennant-Eyles A.J."/>
            <person name="Moffitt H."/>
            <person name="Whitehouse C.A."/>
            <person name="Roberts R.G."/>
        </authorList>
    </citation>
    <scope>SUBCELLULAR LOCATION</scope>
    <scope>TISSUE SPECIFICITY</scope>
</reference>
<keyword id="KW-1015">Disulfide bond</keyword>
<keyword id="KW-0256">Endoplasmic reticulum</keyword>
<keyword id="KW-0472">Membrane</keyword>
<keyword id="KW-1185">Reference proteome</keyword>
<keyword id="KW-0735">Signal-anchor</keyword>
<keyword id="KW-0812">Transmembrane</keyword>
<keyword id="KW-1133">Transmembrane helix</keyword>
<proteinExistence type="evidence at transcript level"/>